<comment type="function">
    <text evidence="1">Specifically methylates the pseudouridine at position 1915 (m3Psi1915) in 23S rRNA.</text>
</comment>
<comment type="catalytic activity">
    <reaction evidence="1">
        <text>pseudouridine(1915) in 23S rRNA + S-adenosyl-L-methionine = N(3)-methylpseudouridine(1915) in 23S rRNA + S-adenosyl-L-homocysteine + H(+)</text>
        <dbReference type="Rhea" id="RHEA:42752"/>
        <dbReference type="Rhea" id="RHEA-COMP:10221"/>
        <dbReference type="Rhea" id="RHEA-COMP:10222"/>
        <dbReference type="ChEBI" id="CHEBI:15378"/>
        <dbReference type="ChEBI" id="CHEBI:57856"/>
        <dbReference type="ChEBI" id="CHEBI:59789"/>
        <dbReference type="ChEBI" id="CHEBI:65314"/>
        <dbReference type="ChEBI" id="CHEBI:74486"/>
        <dbReference type="EC" id="2.1.1.177"/>
    </reaction>
</comment>
<comment type="subunit">
    <text evidence="1">Homodimer.</text>
</comment>
<comment type="subcellular location">
    <subcellularLocation>
        <location evidence="1">Cytoplasm</location>
    </subcellularLocation>
</comment>
<comment type="similarity">
    <text evidence="1">Belongs to the RNA methyltransferase RlmH family.</text>
</comment>
<sequence>MKLQLVAVGTKMPDWVQTGFTEYLRRFPKDMPFELIEIPAGKRGKNADIKRILDKEGEQMLAAAGKNRIVTLDIPGKPWDTPQLAAELERWKLDGRDVSLLIGGPEGLSPACKAAAEQSWSLSALTLPHPLVRVLVAESLYRAWSITTNHPYHRE</sequence>
<keyword id="KW-0963">Cytoplasm</keyword>
<keyword id="KW-0489">Methyltransferase</keyword>
<keyword id="KW-1185">Reference proteome</keyword>
<keyword id="KW-0698">rRNA processing</keyword>
<keyword id="KW-0949">S-adenosyl-L-methionine</keyword>
<keyword id="KW-0808">Transferase</keyword>
<accession>B7L9I0</accession>
<feature type="chain" id="PRO_1000199817" description="Ribosomal RNA large subunit methyltransferase H">
    <location>
        <begin position="1"/>
        <end position="155"/>
    </location>
</feature>
<feature type="binding site" evidence="1">
    <location>
        <position position="72"/>
    </location>
    <ligand>
        <name>S-adenosyl-L-methionine</name>
        <dbReference type="ChEBI" id="CHEBI:59789"/>
    </ligand>
</feature>
<feature type="binding site" evidence="1">
    <location>
        <position position="103"/>
    </location>
    <ligand>
        <name>S-adenosyl-L-methionine</name>
        <dbReference type="ChEBI" id="CHEBI:59789"/>
    </ligand>
</feature>
<feature type="binding site" evidence="1">
    <location>
        <begin position="122"/>
        <end position="127"/>
    </location>
    <ligand>
        <name>S-adenosyl-L-methionine</name>
        <dbReference type="ChEBI" id="CHEBI:59789"/>
    </ligand>
</feature>
<reference key="1">
    <citation type="journal article" date="2009" name="PLoS Genet.">
        <title>Organised genome dynamics in the Escherichia coli species results in highly diverse adaptive paths.</title>
        <authorList>
            <person name="Touchon M."/>
            <person name="Hoede C."/>
            <person name="Tenaillon O."/>
            <person name="Barbe V."/>
            <person name="Baeriswyl S."/>
            <person name="Bidet P."/>
            <person name="Bingen E."/>
            <person name="Bonacorsi S."/>
            <person name="Bouchier C."/>
            <person name="Bouvet O."/>
            <person name="Calteau A."/>
            <person name="Chiapello H."/>
            <person name="Clermont O."/>
            <person name="Cruveiller S."/>
            <person name="Danchin A."/>
            <person name="Diard M."/>
            <person name="Dossat C."/>
            <person name="Karoui M.E."/>
            <person name="Frapy E."/>
            <person name="Garry L."/>
            <person name="Ghigo J.M."/>
            <person name="Gilles A.M."/>
            <person name="Johnson J."/>
            <person name="Le Bouguenec C."/>
            <person name="Lescat M."/>
            <person name="Mangenot S."/>
            <person name="Martinez-Jehanne V."/>
            <person name="Matic I."/>
            <person name="Nassif X."/>
            <person name="Oztas S."/>
            <person name="Petit M.A."/>
            <person name="Pichon C."/>
            <person name="Rouy Z."/>
            <person name="Ruf C.S."/>
            <person name="Schneider D."/>
            <person name="Tourret J."/>
            <person name="Vacherie B."/>
            <person name="Vallenet D."/>
            <person name="Medigue C."/>
            <person name="Rocha E.P.C."/>
            <person name="Denamur E."/>
        </authorList>
    </citation>
    <scope>NUCLEOTIDE SEQUENCE [LARGE SCALE GENOMIC DNA]</scope>
    <source>
        <strain>55989 / EAEC</strain>
    </source>
</reference>
<protein>
    <recommendedName>
        <fullName evidence="1">Ribosomal RNA large subunit methyltransferase H</fullName>
        <ecNumber evidence="1">2.1.1.177</ecNumber>
    </recommendedName>
    <alternativeName>
        <fullName evidence="1">23S rRNA (pseudouridine1915-N3)-methyltransferase</fullName>
    </alternativeName>
    <alternativeName>
        <fullName evidence="1">23S rRNA m3Psi1915 methyltransferase</fullName>
    </alternativeName>
    <alternativeName>
        <fullName evidence="1">rRNA (pseudouridine-N3-)-methyltransferase RlmH</fullName>
    </alternativeName>
</protein>
<dbReference type="EC" id="2.1.1.177" evidence="1"/>
<dbReference type="EMBL" id="CU928145">
    <property type="protein sequence ID" value="CAU96500.1"/>
    <property type="molecule type" value="Genomic_DNA"/>
</dbReference>
<dbReference type="RefSeq" id="WP_000776104.1">
    <property type="nucleotide sequence ID" value="NZ_CP028304.1"/>
</dbReference>
<dbReference type="SMR" id="B7L9I0"/>
<dbReference type="GeneID" id="93776846"/>
<dbReference type="KEGG" id="eck:EC55989_0628"/>
<dbReference type="HOGENOM" id="CLU_100552_1_0_6"/>
<dbReference type="Proteomes" id="UP000000746">
    <property type="component" value="Chromosome"/>
</dbReference>
<dbReference type="GO" id="GO:0005737">
    <property type="term" value="C:cytoplasm"/>
    <property type="evidence" value="ECO:0007669"/>
    <property type="project" value="UniProtKB-SubCell"/>
</dbReference>
<dbReference type="GO" id="GO:0070038">
    <property type="term" value="F:rRNA (pseudouridine-N3-)-methyltransferase activity"/>
    <property type="evidence" value="ECO:0007669"/>
    <property type="project" value="UniProtKB-UniRule"/>
</dbReference>
<dbReference type="CDD" id="cd18081">
    <property type="entry name" value="RlmH-like"/>
    <property type="match status" value="1"/>
</dbReference>
<dbReference type="FunFam" id="3.40.1280.10:FF:000004">
    <property type="entry name" value="Ribosomal RNA large subunit methyltransferase H"/>
    <property type="match status" value="1"/>
</dbReference>
<dbReference type="Gene3D" id="3.40.1280.10">
    <property type="match status" value="1"/>
</dbReference>
<dbReference type="HAMAP" id="MF_00658">
    <property type="entry name" value="23SrRNA_methyltr_H"/>
    <property type="match status" value="1"/>
</dbReference>
<dbReference type="InterPro" id="IPR029028">
    <property type="entry name" value="Alpha/beta_knot_MTases"/>
</dbReference>
<dbReference type="InterPro" id="IPR003742">
    <property type="entry name" value="RlmH-like"/>
</dbReference>
<dbReference type="InterPro" id="IPR029026">
    <property type="entry name" value="tRNA_m1G_MTases_N"/>
</dbReference>
<dbReference type="NCBIfam" id="NF000984">
    <property type="entry name" value="PRK00103.1-1"/>
    <property type="match status" value="1"/>
</dbReference>
<dbReference type="NCBIfam" id="NF000986">
    <property type="entry name" value="PRK00103.1-4"/>
    <property type="match status" value="1"/>
</dbReference>
<dbReference type="NCBIfam" id="TIGR00246">
    <property type="entry name" value="tRNA_RlmH_YbeA"/>
    <property type="match status" value="1"/>
</dbReference>
<dbReference type="PANTHER" id="PTHR33603">
    <property type="entry name" value="METHYLTRANSFERASE"/>
    <property type="match status" value="1"/>
</dbReference>
<dbReference type="PANTHER" id="PTHR33603:SF1">
    <property type="entry name" value="RIBOSOMAL RNA LARGE SUBUNIT METHYLTRANSFERASE H"/>
    <property type="match status" value="1"/>
</dbReference>
<dbReference type="Pfam" id="PF02590">
    <property type="entry name" value="SPOUT_MTase"/>
    <property type="match status" value="1"/>
</dbReference>
<dbReference type="PIRSF" id="PIRSF004505">
    <property type="entry name" value="MT_bac"/>
    <property type="match status" value="1"/>
</dbReference>
<dbReference type="SUPFAM" id="SSF75217">
    <property type="entry name" value="alpha/beta knot"/>
    <property type="match status" value="1"/>
</dbReference>
<proteinExistence type="inferred from homology"/>
<name>RLMH_ECO55</name>
<evidence type="ECO:0000255" key="1">
    <source>
        <dbReference type="HAMAP-Rule" id="MF_00658"/>
    </source>
</evidence>
<gene>
    <name evidence="1" type="primary">rlmH</name>
    <name type="ordered locus">EC55989_0628</name>
</gene>
<organism>
    <name type="scientific">Escherichia coli (strain 55989 / EAEC)</name>
    <dbReference type="NCBI Taxonomy" id="585055"/>
    <lineage>
        <taxon>Bacteria</taxon>
        <taxon>Pseudomonadati</taxon>
        <taxon>Pseudomonadota</taxon>
        <taxon>Gammaproteobacteria</taxon>
        <taxon>Enterobacterales</taxon>
        <taxon>Enterobacteriaceae</taxon>
        <taxon>Escherichia</taxon>
    </lineage>
</organism>